<proteinExistence type="inferred from homology"/>
<sequence>MALPTIAIVGRPNVGKSTLFNRIAGERISIVEDVEGVTRDRIYATGEWLNRSFSMIDTGGIDDVDAPFMEQIKHQAEIAMEEADVIVFVVSGKEGITDADEYVARKLYKTHKPVILAVNKVDNPEMRNDIYDFYALGLGEPLPISSVHGIGTGDVLDAIVENLPNEYEEENPDVIKFSLIGRPNVGKSSLINAILGEDRVIASPVAGTTRDAIDTHFTDTDGQEFTMIDTAGMRKSGKVYENTEKYSVMRAMRAIDRSDVVLMVINAEEGIREYDKRIAGFAHEAGKGMIIVVNKWDTLEKDNHTMKNWEEDIREQFQYLPYAPIIFVSALTKQRLHKLPEMIKQISESQNTRIPSAVLNDVIMDAIAINPTPTDKGKRLKIFYATQVATKPPTFVIFVNEEELMHFSYLRFLENQIRKAFVFEGTPIHLIARKRK</sequence>
<accession>B5E756</accession>
<keyword id="KW-0342">GTP-binding</keyword>
<keyword id="KW-0547">Nucleotide-binding</keyword>
<keyword id="KW-0677">Repeat</keyword>
<keyword id="KW-0690">Ribosome biogenesis</keyword>
<comment type="function">
    <text evidence="1">GTPase that plays an essential role in the late steps of ribosome biogenesis.</text>
</comment>
<comment type="subunit">
    <text evidence="1">Associates with the 50S ribosomal subunit.</text>
</comment>
<comment type="similarity">
    <text evidence="1">Belongs to the TRAFAC class TrmE-Era-EngA-EngB-Septin-like GTPase superfamily. EngA (Der) GTPase family.</text>
</comment>
<reference key="1">
    <citation type="journal article" date="2001" name="Microb. Drug Resist.">
        <title>Annotated draft genomic sequence from a Streptococcus pneumoniae type 19F clinical isolate.</title>
        <authorList>
            <person name="Dopazo J."/>
            <person name="Mendoza A."/>
            <person name="Herrero J."/>
            <person name="Caldara F."/>
            <person name="Humbert Y."/>
            <person name="Friedli L."/>
            <person name="Guerrier M."/>
            <person name="Grand-Schenk E."/>
            <person name="Gandin C."/>
            <person name="de Francesco M."/>
            <person name="Polissi A."/>
            <person name="Buell G."/>
            <person name="Feger G."/>
            <person name="Garcia E."/>
            <person name="Peitsch M."/>
            <person name="Garcia-Bustos J.F."/>
        </authorList>
    </citation>
    <scope>NUCLEOTIDE SEQUENCE [LARGE SCALE GENOMIC DNA]</scope>
    <source>
        <strain>G54</strain>
    </source>
</reference>
<reference key="2">
    <citation type="submission" date="2008-03" db="EMBL/GenBank/DDBJ databases">
        <title>Pneumococcal beta glucoside metabolism investigated by whole genome comparison.</title>
        <authorList>
            <person name="Mulas L."/>
            <person name="Trappetti C."/>
            <person name="Hakenbeck R."/>
            <person name="Iannelli F."/>
            <person name="Pozzi G."/>
            <person name="Davidsen T.M."/>
            <person name="Tettelin H."/>
            <person name="Oggioni M."/>
        </authorList>
    </citation>
    <scope>NUCLEOTIDE SEQUENCE [LARGE SCALE GENOMIC DNA]</scope>
    <source>
        <strain>G54</strain>
    </source>
</reference>
<evidence type="ECO:0000255" key="1">
    <source>
        <dbReference type="HAMAP-Rule" id="MF_00195"/>
    </source>
</evidence>
<dbReference type="EMBL" id="CP001015">
    <property type="protein sequence ID" value="ACF56380.1"/>
    <property type="molecule type" value="Genomic_DNA"/>
</dbReference>
<dbReference type="SMR" id="B5E756"/>
<dbReference type="KEGG" id="spx:SPG_1615"/>
<dbReference type="HOGENOM" id="CLU_016077_6_2_9"/>
<dbReference type="GO" id="GO:0005525">
    <property type="term" value="F:GTP binding"/>
    <property type="evidence" value="ECO:0007669"/>
    <property type="project" value="UniProtKB-UniRule"/>
</dbReference>
<dbReference type="GO" id="GO:0043022">
    <property type="term" value="F:ribosome binding"/>
    <property type="evidence" value="ECO:0007669"/>
    <property type="project" value="TreeGrafter"/>
</dbReference>
<dbReference type="GO" id="GO:0042254">
    <property type="term" value="P:ribosome biogenesis"/>
    <property type="evidence" value="ECO:0007669"/>
    <property type="project" value="UniProtKB-KW"/>
</dbReference>
<dbReference type="CDD" id="cd01894">
    <property type="entry name" value="EngA1"/>
    <property type="match status" value="1"/>
</dbReference>
<dbReference type="CDD" id="cd01895">
    <property type="entry name" value="EngA2"/>
    <property type="match status" value="1"/>
</dbReference>
<dbReference type="FunFam" id="3.30.300.20:FF:000004">
    <property type="entry name" value="GTPase Der"/>
    <property type="match status" value="1"/>
</dbReference>
<dbReference type="FunFam" id="3.40.50.300:FF:000040">
    <property type="entry name" value="GTPase Der"/>
    <property type="match status" value="1"/>
</dbReference>
<dbReference type="FunFam" id="3.40.50.300:FF:000057">
    <property type="entry name" value="GTPase Der"/>
    <property type="match status" value="1"/>
</dbReference>
<dbReference type="Gene3D" id="3.30.300.20">
    <property type="match status" value="1"/>
</dbReference>
<dbReference type="Gene3D" id="3.40.50.300">
    <property type="entry name" value="P-loop containing nucleotide triphosphate hydrolases"/>
    <property type="match status" value="2"/>
</dbReference>
<dbReference type="HAMAP" id="MF_00195">
    <property type="entry name" value="GTPase_Der"/>
    <property type="match status" value="1"/>
</dbReference>
<dbReference type="InterPro" id="IPR031166">
    <property type="entry name" value="G_ENGA"/>
</dbReference>
<dbReference type="InterPro" id="IPR006073">
    <property type="entry name" value="GTP-bd"/>
</dbReference>
<dbReference type="InterPro" id="IPR016484">
    <property type="entry name" value="GTPase_Der"/>
</dbReference>
<dbReference type="InterPro" id="IPR032859">
    <property type="entry name" value="KH_dom-like"/>
</dbReference>
<dbReference type="InterPro" id="IPR015946">
    <property type="entry name" value="KH_dom-like_a/b"/>
</dbReference>
<dbReference type="InterPro" id="IPR027417">
    <property type="entry name" value="P-loop_NTPase"/>
</dbReference>
<dbReference type="InterPro" id="IPR005225">
    <property type="entry name" value="Small_GTP-bd"/>
</dbReference>
<dbReference type="NCBIfam" id="TIGR03594">
    <property type="entry name" value="GTPase_EngA"/>
    <property type="match status" value="1"/>
</dbReference>
<dbReference type="NCBIfam" id="TIGR00231">
    <property type="entry name" value="small_GTP"/>
    <property type="match status" value="2"/>
</dbReference>
<dbReference type="PANTHER" id="PTHR43834">
    <property type="entry name" value="GTPASE DER"/>
    <property type="match status" value="1"/>
</dbReference>
<dbReference type="PANTHER" id="PTHR43834:SF6">
    <property type="entry name" value="GTPASE DER"/>
    <property type="match status" value="1"/>
</dbReference>
<dbReference type="Pfam" id="PF14714">
    <property type="entry name" value="KH_dom-like"/>
    <property type="match status" value="1"/>
</dbReference>
<dbReference type="Pfam" id="PF01926">
    <property type="entry name" value="MMR_HSR1"/>
    <property type="match status" value="2"/>
</dbReference>
<dbReference type="PIRSF" id="PIRSF006485">
    <property type="entry name" value="GTP-binding_EngA"/>
    <property type="match status" value="1"/>
</dbReference>
<dbReference type="PRINTS" id="PR00326">
    <property type="entry name" value="GTP1OBG"/>
</dbReference>
<dbReference type="SUPFAM" id="SSF52540">
    <property type="entry name" value="P-loop containing nucleoside triphosphate hydrolases"/>
    <property type="match status" value="2"/>
</dbReference>
<dbReference type="PROSITE" id="PS51712">
    <property type="entry name" value="G_ENGA"/>
    <property type="match status" value="2"/>
</dbReference>
<name>DER_STRP4</name>
<protein>
    <recommendedName>
        <fullName evidence="1">GTPase Der</fullName>
    </recommendedName>
    <alternativeName>
        <fullName evidence="1">GTP-binding protein EngA</fullName>
    </alternativeName>
</protein>
<gene>
    <name evidence="1" type="primary">der</name>
    <name type="synonym">engA</name>
    <name type="ordered locus">SPG_1615</name>
</gene>
<feature type="chain" id="PRO_1000099164" description="GTPase Der">
    <location>
        <begin position="1"/>
        <end position="436"/>
    </location>
</feature>
<feature type="domain" description="EngA-type G 1">
    <location>
        <begin position="4"/>
        <end position="167"/>
    </location>
</feature>
<feature type="domain" description="EngA-type G 2">
    <location>
        <begin position="175"/>
        <end position="351"/>
    </location>
</feature>
<feature type="domain" description="KH-like" evidence="1">
    <location>
        <begin position="352"/>
        <end position="436"/>
    </location>
</feature>
<feature type="binding site" evidence="1">
    <location>
        <begin position="10"/>
        <end position="17"/>
    </location>
    <ligand>
        <name>GTP</name>
        <dbReference type="ChEBI" id="CHEBI:37565"/>
        <label>1</label>
    </ligand>
</feature>
<feature type="binding site" evidence="1">
    <location>
        <begin position="57"/>
        <end position="61"/>
    </location>
    <ligand>
        <name>GTP</name>
        <dbReference type="ChEBI" id="CHEBI:37565"/>
        <label>1</label>
    </ligand>
</feature>
<feature type="binding site" evidence="1">
    <location>
        <begin position="119"/>
        <end position="122"/>
    </location>
    <ligand>
        <name>GTP</name>
        <dbReference type="ChEBI" id="CHEBI:37565"/>
        <label>1</label>
    </ligand>
</feature>
<feature type="binding site" evidence="1">
    <location>
        <begin position="181"/>
        <end position="188"/>
    </location>
    <ligand>
        <name>GTP</name>
        <dbReference type="ChEBI" id="CHEBI:37565"/>
        <label>2</label>
    </ligand>
</feature>
<feature type="binding site" evidence="1">
    <location>
        <begin position="229"/>
        <end position="233"/>
    </location>
    <ligand>
        <name>GTP</name>
        <dbReference type="ChEBI" id="CHEBI:37565"/>
        <label>2</label>
    </ligand>
</feature>
<feature type="binding site" evidence="1">
    <location>
        <begin position="294"/>
        <end position="297"/>
    </location>
    <ligand>
        <name>GTP</name>
        <dbReference type="ChEBI" id="CHEBI:37565"/>
        <label>2</label>
    </ligand>
</feature>
<organism>
    <name type="scientific">Streptococcus pneumoniae serotype 19F (strain G54)</name>
    <dbReference type="NCBI Taxonomy" id="512566"/>
    <lineage>
        <taxon>Bacteria</taxon>
        <taxon>Bacillati</taxon>
        <taxon>Bacillota</taxon>
        <taxon>Bacilli</taxon>
        <taxon>Lactobacillales</taxon>
        <taxon>Streptococcaceae</taxon>
        <taxon>Streptococcus</taxon>
    </lineage>
</organism>